<protein>
    <recommendedName>
        <fullName evidence="1">Large ribosomal subunit protein uL6</fullName>
    </recommendedName>
    <alternativeName>
        <fullName evidence="2">50S ribosomal protein L6</fullName>
    </alternativeName>
</protein>
<accession>C1CC21</accession>
<dbReference type="EMBL" id="CP000919">
    <property type="protein sequence ID" value="ACO18863.1"/>
    <property type="molecule type" value="Genomic_DNA"/>
</dbReference>
<dbReference type="RefSeq" id="WP_000086633.1">
    <property type="nucleotide sequence ID" value="NC_012466.1"/>
</dbReference>
<dbReference type="SMR" id="C1CC21"/>
<dbReference type="KEGG" id="sjj:SPJ_0234"/>
<dbReference type="HOGENOM" id="CLU_065464_1_2_9"/>
<dbReference type="Proteomes" id="UP000002206">
    <property type="component" value="Chromosome"/>
</dbReference>
<dbReference type="GO" id="GO:0022625">
    <property type="term" value="C:cytosolic large ribosomal subunit"/>
    <property type="evidence" value="ECO:0007669"/>
    <property type="project" value="TreeGrafter"/>
</dbReference>
<dbReference type="GO" id="GO:0019843">
    <property type="term" value="F:rRNA binding"/>
    <property type="evidence" value="ECO:0007669"/>
    <property type="project" value="UniProtKB-UniRule"/>
</dbReference>
<dbReference type="GO" id="GO:0003735">
    <property type="term" value="F:structural constituent of ribosome"/>
    <property type="evidence" value="ECO:0007669"/>
    <property type="project" value="InterPro"/>
</dbReference>
<dbReference type="GO" id="GO:0002181">
    <property type="term" value="P:cytoplasmic translation"/>
    <property type="evidence" value="ECO:0007669"/>
    <property type="project" value="TreeGrafter"/>
</dbReference>
<dbReference type="FunFam" id="3.90.930.12:FF:000001">
    <property type="entry name" value="50S ribosomal protein L6"/>
    <property type="match status" value="1"/>
</dbReference>
<dbReference type="FunFam" id="3.90.930.12:FF:000002">
    <property type="entry name" value="50S ribosomal protein L6"/>
    <property type="match status" value="1"/>
</dbReference>
<dbReference type="Gene3D" id="3.90.930.12">
    <property type="entry name" value="Ribosomal protein L6, alpha-beta domain"/>
    <property type="match status" value="2"/>
</dbReference>
<dbReference type="HAMAP" id="MF_01365_B">
    <property type="entry name" value="Ribosomal_uL6_B"/>
    <property type="match status" value="1"/>
</dbReference>
<dbReference type="InterPro" id="IPR000702">
    <property type="entry name" value="Ribosomal_uL6-like"/>
</dbReference>
<dbReference type="InterPro" id="IPR036789">
    <property type="entry name" value="Ribosomal_uL6-like_a/b-dom_sf"/>
</dbReference>
<dbReference type="InterPro" id="IPR020040">
    <property type="entry name" value="Ribosomal_uL6_a/b-dom"/>
</dbReference>
<dbReference type="InterPro" id="IPR019906">
    <property type="entry name" value="Ribosomal_uL6_bac-type"/>
</dbReference>
<dbReference type="InterPro" id="IPR002358">
    <property type="entry name" value="Ribosomal_uL6_CS"/>
</dbReference>
<dbReference type="NCBIfam" id="TIGR03654">
    <property type="entry name" value="L6_bact"/>
    <property type="match status" value="1"/>
</dbReference>
<dbReference type="PANTHER" id="PTHR11655">
    <property type="entry name" value="60S/50S RIBOSOMAL PROTEIN L6/L9"/>
    <property type="match status" value="1"/>
</dbReference>
<dbReference type="PANTHER" id="PTHR11655:SF14">
    <property type="entry name" value="LARGE RIBOSOMAL SUBUNIT PROTEIN UL6M"/>
    <property type="match status" value="1"/>
</dbReference>
<dbReference type="Pfam" id="PF00347">
    <property type="entry name" value="Ribosomal_L6"/>
    <property type="match status" value="2"/>
</dbReference>
<dbReference type="PIRSF" id="PIRSF002162">
    <property type="entry name" value="Ribosomal_L6"/>
    <property type="match status" value="1"/>
</dbReference>
<dbReference type="PRINTS" id="PR00059">
    <property type="entry name" value="RIBOSOMALL6"/>
</dbReference>
<dbReference type="SUPFAM" id="SSF56053">
    <property type="entry name" value="Ribosomal protein L6"/>
    <property type="match status" value="2"/>
</dbReference>
<dbReference type="PROSITE" id="PS00525">
    <property type="entry name" value="RIBOSOMAL_L6_1"/>
    <property type="match status" value="1"/>
</dbReference>
<evidence type="ECO:0000255" key="1">
    <source>
        <dbReference type="HAMAP-Rule" id="MF_01365"/>
    </source>
</evidence>
<evidence type="ECO:0000305" key="2"/>
<sequence>MSRIGNKVIVLPAGVELANNDNVVTVKGPKGELTREFSKDIEIRVEGTEVTLHRPNDSKEMKTIHGTTRALLNNMVVGVSEGFKKELEMRGVGYRAQLQGSKLVLAVGKSHPDEVEAPEGITFELPNPTTIVVSGISKEVVGQTAAYVRSLRSPEPYKGKGIRYVGEFVRRKEGKTGK</sequence>
<comment type="function">
    <text evidence="1">This protein binds to the 23S rRNA, and is important in its secondary structure. It is located near the subunit interface in the base of the L7/L12 stalk, and near the tRNA binding site of the peptidyltransferase center.</text>
</comment>
<comment type="subunit">
    <text evidence="1">Part of the 50S ribosomal subunit.</text>
</comment>
<comment type="similarity">
    <text evidence="1">Belongs to the universal ribosomal protein uL6 family.</text>
</comment>
<name>RL6_STRZJ</name>
<keyword id="KW-0687">Ribonucleoprotein</keyword>
<keyword id="KW-0689">Ribosomal protein</keyword>
<keyword id="KW-0694">RNA-binding</keyword>
<keyword id="KW-0699">rRNA-binding</keyword>
<proteinExistence type="inferred from homology"/>
<organism>
    <name type="scientific">Streptococcus pneumoniae (strain JJA)</name>
    <dbReference type="NCBI Taxonomy" id="488222"/>
    <lineage>
        <taxon>Bacteria</taxon>
        <taxon>Bacillati</taxon>
        <taxon>Bacillota</taxon>
        <taxon>Bacilli</taxon>
        <taxon>Lactobacillales</taxon>
        <taxon>Streptococcaceae</taxon>
        <taxon>Streptococcus</taxon>
    </lineage>
</organism>
<gene>
    <name evidence="1" type="primary">rplF</name>
    <name type="ordered locus">SPJ_0234</name>
</gene>
<feature type="chain" id="PRO_1000166834" description="Large ribosomal subunit protein uL6">
    <location>
        <begin position="1"/>
        <end position="178"/>
    </location>
</feature>
<reference key="1">
    <citation type="journal article" date="2010" name="Genome Biol.">
        <title>Structure and dynamics of the pan-genome of Streptococcus pneumoniae and closely related species.</title>
        <authorList>
            <person name="Donati C."/>
            <person name="Hiller N.L."/>
            <person name="Tettelin H."/>
            <person name="Muzzi A."/>
            <person name="Croucher N.J."/>
            <person name="Angiuoli S.V."/>
            <person name="Oggioni M."/>
            <person name="Dunning Hotopp J.C."/>
            <person name="Hu F.Z."/>
            <person name="Riley D.R."/>
            <person name="Covacci A."/>
            <person name="Mitchell T.J."/>
            <person name="Bentley S.D."/>
            <person name="Kilian M."/>
            <person name="Ehrlich G.D."/>
            <person name="Rappuoli R."/>
            <person name="Moxon E.R."/>
            <person name="Masignani V."/>
        </authorList>
    </citation>
    <scope>NUCLEOTIDE SEQUENCE [LARGE SCALE GENOMIC DNA]</scope>
    <source>
        <strain>JJA</strain>
    </source>
</reference>